<comment type="function">
    <text evidence="1">Essential cell division protein that stabilizes the FtsZ protofilaments by cross-linking them and that serves as a cytoplasmic membrane anchor for the Z ring. Also required for the recruitment to the septal ring of downstream cell division proteins.</text>
</comment>
<comment type="subunit">
    <text evidence="1">Interacts with FtsZ via their C-terminal domains.</text>
</comment>
<comment type="subcellular location">
    <subcellularLocation>
        <location evidence="1">Cell inner membrane</location>
        <topology evidence="1">Single-pass type I membrane protein</topology>
    </subcellularLocation>
    <text evidence="1">Localizes to the Z ring in an FtsZ-dependent manner.</text>
</comment>
<comment type="similarity">
    <text evidence="1">Belongs to the ZipA family.</text>
</comment>
<protein>
    <recommendedName>
        <fullName evidence="1">Cell division protein ZipA</fullName>
    </recommendedName>
</protein>
<evidence type="ECO:0000255" key="1">
    <source>
        <dbReference type="HAMAP-Rule" id="MF_00509"/>
    </source>
</evidence>
<evidence type="ECO:0000256" key="2">
    <source>
        <dbReference type="SAM" id="MobiDB-lite"/>
    </source>
</evidence>
<organism>
    <name type="scientific">Marinobacter nauticus (strain ATCC 700491 / DSM 11845 / VT8)</name>
    <name type="common">Marinobacter aquaeolei</name>
    <dbReference type="NCBI Taxonomy" id="351348"/>
    <lineage>
        <taxon>Bacteria</taxon>
        <taxon>Pseudomonadati</taxon>
        <taxon>Pseudomonadota</taxon>
        <taxon>Gammaproteobacteria</taxon>
        <taxon>Pseudomonadales</taxon>
        <taxon>Marinobacteraceae</taxon>
        <taxon>Marinobacter</taxon>
    </lineage>
</organism>
<keyword id="KW-0131">Cell cycle</keyword>
<keyword id="KW-0132">Cell division</keyword>
<keyword id="KW-0997">Cell inner membrane</keyword>
<keyword id="KW-1003">Cell membrane</keyword>
<keyword id="KW-0472">Membrane</keyword>
<keyword id="KW-0812">Transmembrane</keyword>
<keyword id="KW-1133">Transmembrane helix</keyword>
<reference key="1">
    <citation type="journal article" date="2011" name="Appl. Environ. Microbiol.">
        <title>Genomic potential of Marinobacter aquaeolei, a biogeochemical 'opportunitroph'.</title>
        <authorList>
            <person name="Singer E."/>
            <person name="Webb E.A."/>
            <person name="Nelson W.C."/>
            <person name="Heidelberg J.F."/>
            <person name="Ivanova N."/>
            <person name="Pati A."/>
            <person name="Edwards K.J."/>
        </authorList>
    </citation>
    <scope>NUCLEOTIDE SEQUENCE [LARGE SCALE GENOMIC DNA]</scope>
    <source>
        <strain>ATCC 700491 / DSM 11845 / VT8</strain>
    </source>
</reference>
<gene>
    <name evidence="1" type="primary">zipA</name>
    <name type="ordered locus">Maqu_1166</name>
</gene>
<accession>A1TZT8</accession>
<name>ZIPA_MARN8</name>
<feature type="chain" id="PRO_1000060869" description="Cell division protein ZipA">
    <location>
        <begin position="1"/>
        <end position="338"/>
    </location>
</feature>
<feature type="topological domain" description="Periplasmic" evidence="1">
    <location>
        <begin position="1"/>
        <end position="2"/>
    </location>
</feature>
<feature type="transmembrane region" description="Helical" evidence="1">
    <location>
        <begin position="3"/>
        <end position="23"/>
    </location>
</feature>
<feature type="topological domain" description="Cytoplasmic" evidence="1">
    <location>
        <begin position="24"/>
        <end position="338"/>
    </location>
</feature>
<feature type="region of interest" description="Disordered" evidence="2">
    <location>
        <begin position="33"/>
        <end position="192"/>
    </location>
</feature>
<feature type="compositionally biased region" description="Basic and acidic residues" evidence="2">
    <location>
        <begin position="70"/>
        <end position="81"/>
    </location>
</feature>
<feature type="compositionally biased region" description="Basic and acidic residues" evidence="2">
    <location>
        <begin position="138"/>
        <end position="162"/>
    </location>
</feature>
<sequence>MSLREWLIAIGTLVIIGIVIDGVRRMRRARKESMAISSGMGADELKDSPLDDDFNPELPNGGARTVSRSTLEDRGYLKRDMSAPVSTDQEDDVTPESGWSARDDDEDDGILSPPRVVKPETEESEPVEPEAVKTPATEVDRSKTRPSVPEKAKAEPEPRAEEPPVVTTEVEEDTARRTPNKPRKNQPLAGANRPEAREVLVINVLARSGEQFQGSKLKSLFEACGLEQGDMDIYHRHESEDTTTPVQFSVANAVEPGTFRPQDMAGLSTPGISFFMSLPGPTNALQAFEFMLETAQCVVRNLGGELKDERRSVMTPQTIEHCRQRIREFERKQRSQRA</sequence>
<proteinExistence type="inferred from homology"/>
<dbReference type="EMBL" id="CP000514">
    <property type="protein sequence ID" value="ABM18257.1"/>
    <property type="molecule type" value="Genomic_DNA"/>
</dbReference>
<dbReference type="RefSeq" id="WP_011784674.1">
    <property type="nucleotide sequence ID" value="NC_008740.1"/>
</dbReference>
<dbReference type="SMR" id="A1TZT8"/>
<dbReference type="STRING" id="351348.Maqu_1166"/>
<dbReference type="KEGG" id="maq:Maqu_1166"/>
<dbReference type="eggNOG" id="COG3115">
    <property type="taxonomic scope" value="Bacteria"/>
</dbReference>
<dbReference type="HOGENOM" id="CLU_030174_0_0_6"/>
<dbReference type="OrthoDB" id="7054914at2"/>
<dbReference type="Proteomes" id="UP000000998">
    <property type="component" value="Chromosome"/>
</dbReference>
<dbReference type="GO" id="GO:0032153">
    <property type="term" value="C:cell division site"/>
    <property type="evidence" value="ECO:0007669"/>
    <property type="project" value="UniProtKB-UniRule"/>
</dbReference>
<dbReference type="GO" id="GO:0005886">
    <property type="term" value="C:plasma membrane"/>
    <property type="evidence" value="ECO:0007669"/>
    <property type="project" value="UniProtKB-SubCell"/>
</dbReference>
<dbReference type="GO" id="GO:0000917">
    <property type="term" value="P:division septum assembly"/>
    <property type="evidence" value="ECO:0007669"/>
    <property type="project" value="TreeGrafter"/>
</dbReference>
<dbReference type="GO" id="GO:0043093">
    <property type="term" value="P:FtsZ-dependent cytokinesis"/>
    <property type="evidence" value="ECO:0007669"/>
    <property type="project" value="UniProtKB-UniRule"/>
</dbReference>
<dbReference type="Gene3D" id="3.30.1400.10">
    <property type="entry name" value="ZipA, C-terminal FtsZ-binding domain"/>
    <property type="match status" value="1"/>
</dbReference>
<dbReference type="HAMAP" id="MF_00509">
    <property type="entry name" value="ZipA"/>
    <property type="match status" value="1"/>
</dbReference>
<dbReference type="InterPro" id="IPR011919">
    <property type="entry name" value="Cell_div_ZipA"/>
</dbReference>
<dbReference type="InterPro" id="IPR007449">
    <property type="entry name" value="ZipA_FtsZ-bd_C"/>
</dbReference>
<dbReference type="InterPro" id="IPR036765">
    <property type="entry name" value="ZipA_FtsZ-bd_C_sf"/>
</dbReference>
<dbReference type="NCBIfam" id="TIGR02205">
    <property type="entry name" value="septum_zipA"/>
    <property type="match status" value="1"/>
</dbReference>
<dbReference type="PANTHER" id="PTHR38685">
    <property type="entry name" value="CELL DIVISION PROTEIN ZIPA"/>
    <property type="match status" value="1"/>
</dbReference>
<dbReference type="PANTHER" id="PTHR38685:SF1">
    <property type="entry name" value="CELL DIVISION PROTEIN ZIPA"/>
    <property type="match status" value="1"/>
</dbReference>
<dbReference type="Pfam" id="PF04354">
    <property type="entry name" value="ZipA_C"/>
    <property type="match status" value="1"/>
</dbReference>
<dbReference type="SMART" id="SM00771">
    <property type="entry name" value="ZipA_C"/>
    <property type="match status" value="1"/>
</dbReference>
<dbReference type="SUPFAM" id="SSF64383">
    <property type="entry name" value="Cell-division protein ZipA, C-terminal domain"/>
    <property type="match status" value="1"/>
</dbReference>